<comment type="function">
    <text evidence="1">Involved in transcription antitermination. Required for transcription of ribosomal RNA (rRNA) genes. Binds specifically to the boxA antiterminator sequence of the ribosomal RNA (rrn) operons.</text>
</comment>
<comment type="similarity">
    <text evidence="1">Belongs to the NusB family.</text>
</comment>
<feature type="chain" id="PRO_1000092553" description="Transcription antitermination protein NusB">
    <location>
        <begin position="1"/>
        <end position="137"/>
    </location>
</feature>
<proteinExistence type="inferred from homology"/>
<sequence>MSRRQSRKSAMQLIYEMNMNGDYDKQRIEEFCKYQNINKNDIEFFKEIVLNFIEHIDDIVNIIENNTKQWNLDRINKLDLSILQVGVCEILYVESTPDSVAINEAVELAKEYSTEKSYSFINGILGSVLKRKENASL</sequence>
<organism>
    <name type="scientific">Finegoldia magna (strain ATCC 29328 / DSM 20472 / WAL 2508)</name>
    <name type="common">Peptostreptococcus magnus</name>
    <dbReference type="NCBI Taxonomy" id="334413"/>
    <lineage>
        <taxon>Bacteria</taxon>
        <taxon>Bacillati</taxon>
        <taxon>Bacillota</taxon>
        <taxon>Tissierellia</taxon>
        <taxon>Tissierellales</taxon>
        <taxon>Peptoniphilaceae</taxon>
        <taxon>Finegoldia</taxon>
    </lineage>
</organism>
<dbReference type="EMBL" id="AP008971">
    <property type="protein sequence ID" value="BAG08261.1"/>
    <property type="molecule type" value="Genomic_DNA"/>
</dbReference>
<dbReference type="RefSeq" id="WP_002836525.1">
    <property type="nucleotide sequence ID" value="NC_010376.1"/>
</dbReference>
<dbReference type="SMR" id="B0S1M1"/>
<dbReference type="STRING" id="334413.FMG_0843"/>
<dbReference type="KEGG" id="fma:FMG_0843"/>
<dbReference type="eggNOG" id="COG0781">
    <property type="taxonomic scope" value="Bacteria"/>
</dbReference>
<dbReference type="HOGENOM" id="CLU_087843_3_1_9"/>
<dbReference type="Proteomes" id="UP000001319">
    <property type="component" value="Chromosome"/>
</dbReference>
<dbReference type="GO" id="GO:0005829">
    <property type="term" value="C:cytosol"/>
    <property type="evidence" value="ECO:0007669"/>
    <property type="project" value="TreeGrafter"/>
</dbReference>
<dbReference type="GO" id="GO:0003723">
    <property type="term" value="F:RNA binding"/>
    <property type="evidence" value="ECO:0007669"/>
    <property type="project" value="UniProtKB-UniRule"/>
</dbReference>
<dbReference type="GO" id="GO:0006353">
    <property type="term" value="P:DNA-templated transcription termination"/>
    <property type="evidence" value="ECO:0007669"/>
    <property type="project" value="UniProtKB-UniRule"/>
</dbReference>
<dbReference type="GO" id="GO:0031564">
    <property type="term" value="P:transcription antitermination"/>
    <property type="evidence" value="ECO:0007669"/>
    <property type="project" value="UniProtKB-KW"/>
</dbReference>
<dbReference type="Gene3D" id="1.10.940.10">
    <property type="entry name" value="NusB-like"/>
    <property type="match status" value="1"/>
</dbReference>
<dbReference type="HAMAP" id="MF_00073">
    <property type="entry name" value="NusB"/>
    <property type="match status" value="1"/>
</dbReference>
<dbReference type="InterPro" id="IPR035926">
    <property type="entry name" value="NusB-like_sf"/>
</dbReference>
<dbReference type="InterPro" id="IPR011605">
    <property type="entry name" value="NusB_fam"/>
</dbReference>
<dbReference type="InterPro" id="IPR006027">
    <property type="entry name" value="NusB_RsmB_TIM44"/>
</dbReference>
<dbReference type="NCBIfam" id="TIGR01951">
    <property type="entry name" value="nusB"/>
    <property type="match status" value="1"/>
</dbReference>
<dbReference type="PANTHER" id="PTHR11078:SF3">
    <property type="entry name" value="ANTITERMINATION NUSB DOMAIN-CONTAINING PROTEIN"/>
    <property type="match status" value="1"/>
</dbReference>
<dbReference type="PANTHER" id="PTHR11078">
    <property type="entry name" value="N UTILIZATION SUBSTANCE PROTEIN B-RELATED"/>
    <property type="match status" value="1"/>
</dbReference>
<dbReference type="Pfam" id="PF01029">
    <property type="entry name" value="NusB"/>
    <property type="match status" value="1"/>
</dbReference>
<dbReference type="SUPFAM" id="SSF48013">
    <property type="entry name" value="NusB-like"/>
    <property type="match status" value="1"/>
</dbReference>
<gene>
    <name evidence="1" type="primary">nusB</name>
    <name type="ordered locus">FMG_0843</name>
</gene>
<accession>B0S1M1</accession>
<name>NUSB_FINM2</name>
<protein>
    <recommendedName>
        <fullName evidence="1">Transcription antitermination protein NusB</fullName>
    </recommendedName>
    <alternativeName>
        <fullName evidence="1">Antitermination factor NusB</fullName>
    </alternativeName>
</protein>
<keyword id="KW-1185">Reference proteome</keyword>
<keyword id="KW-0694">RNA-binding</keyword>
<keyword id="KW-0804">Transcription</keyword>
<keyword id="KW-0889">Transcription antitermination</keyword>
<keyword id="KW-0805">Transcription regulation</keyword>
<evidence type="ECO:0000255" key="1">
    <source>
        <dbReference type="HAMAP-Rule" id="MF_00073"/>
    </source>
</evidence>
<reference key="1">
    <citation type="journal article" date="2008" name="DNA Res.">
        <title>Complete genome sequence of Finegoldia magna, an anaerobic opportunistic pathogen.</title>
        <authorList>
            <person name="Goto T."/>
            <person name="Yamashita A."/>
            <person name="Hirakawa H."/>
            <person name="Matsutani M."/>
            <person name="Todo K."/>
            <person name="Ohshima K."/>
            <person name="Toh H."/>
            <person name="Miyamoto K."/>
            <person name="Kuhara S."/>
            <person name="Hattori M."/>
            <person name="Shimizu T."/>
            <person name="Akimoto S."/>
        </authorList>
    </citation>
    <scope>NUCLEOTIDE SEQUENCE [LARGE SCALE GENOMIC DNA]</scope>
    <source>
        <strain>ATCC 29328 / DSM 20472 / WAL 2508</strain>
    </source>
</reference>